<protein>
    <recommendedName>
        <fullName evidence="1">Ribosome-binding factor A</fullName>
    </recommendedName>
</protein>
<name>RBFA_STRP8</name>
<evidence type="ECO:0000255" key="1">
    <source>
        <dbReference type="HAMAP-Rule" id="MF_00003"/>
    </source>
</evidence>
<evidence type="ECO:0000305" key="2"/>
<feature type="chain" id="PRO_0000102750" description="Ribosome-binding factor A">
    <location>
        <begin position="1"/>
        <end position="116"/>
    </location>
</feature>
<reference key="1">
    <citation type="journal article" date="2002" name="Proc. Natl. Acad. Sci. U.S.A.">
        <title>Genome sequence and comparative microarray analysis of serotype M18 group A Streptococcus strains associated with acute rheumatic fever outbreaks.</title>
        <authorList>
            <person name="Smoot J.C."/>
            <person name="Barbian K.D."/>
            <person name="Van Gompel J.J."/>
            <person name="Smoot L.M."/>
            <person name="Chaussee M.S."/>
            <person name="Sylva G.L."/>
            <person name="Sturdevant D.E."/>
            <person name="Ricklefs S.M."/>
            <person name="Porcella S.F."/>
            <person name="Parkins L.D."/>
            <person name="Beres S.B."/>
            <person name="Campbell D.S."/>
            <person name="Smith T.M."/>
            <person name="Zhang Q."/>
            <person name="Kapur V."/>
            <person name="Daly J.A."/>
            <person name="Veasy L.G."/>
            <person name="Musser J.M."/>
        </authorList>
    </citation>
    <scope>NUCLEOTIDE SEQUENCE [LARGE SCALE GENOMIC DNA]</scope>
    <source>
        <strain>MGAS8232</strain>
    </source>
</reference>
<organism>
    <name type="scientific">Streptococcus pyogenes serotype M18 (strain MGAS8232)</name>
    <dbReference type="NCBI Taxonomy" id="186103"/>
    <lineage>
        <taxon>Bacteria</taxon>
        <taxon>Bacillati</taxon>
        <taxon>Bacillota</taxon>
        <taxon>Bacilli</taxon>
        <taxon>Lactobacillales</taxon>
        <taxon>Streptococcaceae</taxon>
        <taxon>Streptococcus</taxon>
    </lineage>
</organism>
<comment type="function">
    <text evidence="1">One of several proteins that assist in the late maturation steps of the functional core of the 30S ribosomal subunit. Associates with free 30S ribosomal subunits (but not with 30S subunits that are part of 70S ribosomes or polysomes). Required for efficient processing of 16S rRNA. May interact with the 5'-terminal helix region of 16S rRNA.</text>
</comment>
<comment type="subunit">
    <text evidence="1">Monomer. Binds 30S ribosomal subunits, but not 50S ribosomal subunits or 70S ribosomes.</text>
</comment>
<comment type="subcellular location">
    <subcellularLocation>
        <location evidence="1">Cytoplasm</location>
    </subcellularLocation>
</comment>
<comment type="similarity">
    <text evidence="1">Belongs to the RbfA family.</text>
</comment>
<comment type="sequence caution" evidence="2">
    <conflict type="erroneous initiation">
        <sequence resource="EMBL-CDS" id="AAL98257"/>
    </conflict>
    <text>Extended N-terminus.</text>
</comment>
<sequence>MANHRIDRVGMEIKREVNDILQKKVRDPRVQGVTITEVQMQGDLSLAKVYYTIMSDLASDNQKAQTGLEKATGTIKRELGKQLTMYKIPDLVFEKDNSIAYGNKIDQLLRELDNKS</sequence>
<accession>Q8NZU8</accession>
<keyword id="KW-0963">Cytoplasm</keyword>
<keyword id="KW-0690">Ribosome biogenesis</keyword>
<gene>
    <name evidence="1" type="primary">rbfA</name>
    <name type="ordered locus">spyM18_1728</name>
</gene>
<dbReference type="EMBL" id="AE009949">
    <property type="protein sequence ID" value="AAL98257.1"/>
    <property type="status" value="ALT_INIT"/>
    <property type="molecule type" value="Genomic_DNA"/>
</dbReference>
<dbReference type="RefSeq" id="WP_002988820.1">
    <property type="nucleotide sequence ID" value="NC_003485.1"/>
</dbReference>
<dbReference type="SMR" id="Q8NZU8"/>
<dbReference type="KEGG" id="spm:spyM18_1728"/>
<dbReference type="HOGENOM" id="CLU_089475_3_0_9"/>
<dbReference type="GO" id="GO:0005829">
    <property type="term" value="C:cytosol"/>
    <property type="evidence" value="ECO:0007669"/>
    <property type="project" value="TreeGrafter"/>
</dbReference>
<dbReference type="GO" id="GO:0043024">
    <property type="term" value="F:ribosomal small subunit binding"/>
    <property type="evidence" value="ECO:0007669"/>
    <property type="project" value="TreeGrafter"/>
</dbReference>
<dbReference type="GO" id="GO:0030490">
    <property type="term" value="P:maturation of SSU-rRNA"/>
    <property type="evidence" value="ECO:0007669"/>
    <property type="project" value="UniProtKB-UniRule"/>
</dbReference>
<dbReference type="Gene3D" id="3.30.300.20">
    <property type="match status" value="1"/>
</dbReference>
<dbReference type="HAMAP" id="MF_00003">
    <property type="entry name" value="RbfA"/>
    <property type="match status" value="1"/>
</dbReference>
<dbReference type="InterPro" id="IPR015946">
    <property type="entry name" value="KH_dom-like_a/b"/>
</dbReference>
<dbReference type="InterPro" id="IPR000238">
    <property type="entry name" value="RbfA"/>
</dbReference>
<dbReference type="InterPro" id="IPR023799">
    <property type="entry name" value="RbfA_dom_sf"/>
</dbReference>
<dbReference type="InterPro" id="IPR020053">
    <property type="entry name" value="Ribosome-bd_factorA_CS"/>
</dbReference>
<dbReference type="NCBIfam" id="TIGR00082">
    <property type="entry name" value="rbfA"/>
    <property type="match status" value="1"/>
</dbReference>
<dbReference type="PANTHER" id="PTHR33515">
    <property type="entry name" value="RIBOSOME-BINDING FACTOR A, CHLOROPLASTIC-RELATED"/>
    <property type="match status" value="1"/>
</dbReference>
<dbReference type="PANTHER" id="PTHR33515:SF1">
    <property type="entry name" value="RIBOSOME-BINDING FACTOR A, CHLOROPLASTIC-RELATED"/>
    <property type="match status" value="1"/>
</dbReference>
<dbReference type="Pfam" id="PF02033">
    <property type="entry name" value="RBFA"/>
    <property type="match status" value="1"/>
</dbReference>
<dbReference type="SUPFAM" id="SSF89919">
    <property type="entry name" value="Ribosome-binding factor A, RbfA"/>
    <property type="match status" value="1"/>
</dbReference>
<dbReference type="PROSITE" id="PS01319">
    <property type="entry name" value="RBFA"/>
    <property type="match status" value="1"/>
</dbReference>
<proteinExistence type="inferred from homology"/>